<sequence length="360" mass="38934">MAKSPETEHPNKVFGWGARDKSGVLSPFHFSRRDNGENDVTVKILFCGVCHTDLHTIKNDWGYSYYPVVPGHEIVGIATKVGKNVTKFKEGDRVGVGVISGSCQSCESCDQDLENYCPQMSFTYNAIGSDGTKNYGGYSENIVVDQRFVLRFPENLPSDSGAPLLCAGITVYSPMKYYGMTEAGKHLGVAGLGGLGHVAVKIGKAFGLKVTVISSSSTKAEEAINHLGADSFLVTTDPQKMKAAIGTMDYIIDTISAVHALYPLLGLLKVNGKLIALGLPEKPLELPMFPLVLGRKMVGGSDVGGMKETQEMLDFCAKHNITADIELIKMDEINTAMERLAKSDVRYRFVIDVANSLSPP</sequence>
<proteinExistence type="evidence at protein level"/>
<organism>
    <name type="scientific">Arabidopsis thaliana</name>
    <name type="common">Mouse-ear cress</name>
    <dbReference type="NCBI Taxonomy" id="3702"/>
    <lineage>
        <taxon>Eukaryota</taxon>
        <taxon>Viridiplantae</taxon>
        <taxon>Streptophyta</taxon>
        <taxon>Embryophyta</taxon>
        <taxon>Tracheophyta</taxon>
        <taxon>Spermatophyta</taxon>
        <taxon>Magnoliopsida</taxon>
        <taxon>eudicotyledons</taxon>
        <taxon>Gunneridae</taxon>
        <taxon>Pentapetalae</taxon>
        <taxon>rosids</taxon>
        <taxon>malvids</taxon>
        <taxon>Brassicales</taxon>
        <taxon>Brassicaceae</taxon>
        <taxon>Camelineae</taxon>
        <taxon>Arabidopsis</taxon>
    </lineage>
</organism>
<accession>P42734</accession>
<accession>B9DHS7</accession>
<accession>C0Z2D3</accession>
<accession>Q8LB84</accession>
<accession>Q94K02</accession>
<reference key="1">
    <citation type="journal article" date="1995" name="Plant Physiol.">
        <title>A gene encoding a cinnamyl alcohol dehydrogenase homolog in Arabidopsis thaliana.</title>
        <authorList>
            <person name="Somers D.A."/>
            <person name="Nourse J.P."/>
            <person name="Manners J.M."/>
            <person name="Abrahams S.L."/>
            <person name="Watson J.M."/>
        </authorList>
    </citation>
    <scope>NUCLEOTIDE SEQUENCE [MRNA] (ISOFORM 1)</scope>
    <source>
        <strain>cv. Columbia</strain>
    </source>
</reference>
<reference key="2">
    <citation type="journal article" date="2004" name="Proc. Natl. Acad. Sci. U.S.A.">
        <title>Functional reclassification of the putative cinnamyl alcohol dehydrogenase multigene family in Arabidopsis.</title>
        <authorList>
            <person name="Kim S.-J."/>
            <person name="Kim M.-R."/>
            <person name="Bedgar D.L."/>
            <person name="Moinuddin S.G.A."/>
            <person name="Cardenas C.L."/>
            <person name="Davin L.B."/>
            <person name="Kang C."/>
            <person name="Lewis N.G."/>
        </authorList>
    </citation>
    <scope>NUCLEOTIDE SEQUENCE [MRNA]</scope>
    <scope>GENE FAMILY</scope>
    <scope>NOMENCLATURE</scope>
</reference>
<reference key="3">
    <citation type="journal article" date="1999" name="Nature">
        <title>Sequence and analysis of chromosome 4 of the plant Arabidopsis thaliana.</title>
        <authorList>
            <person name="Mayer K.F.X."/>
            <person name="Schueller C."/>
            <person name="Wambutt R."/>
            <person name="Murphy G."/>
            <person name="Volckaert G."/>
            <person name="Pohl T."/>
            <person name="Duesterhoeft A."/>
            <person name="Stiekema W."/>
            <person name="Entian K.-D."/>
            <person name="Terryn N."/>
            <person name="Harris B."/>
            <person name="Ansorge W."/>
            <person name="Brandt P."/>
            <person name="Grivell L.A."/>
            <person name="Rieger M."/>
            <person name="Weichselgartner M."/>
            <person name="de Simone V."/>
            <person name="Obermaier B."/>
            <person name="Mache R."/>
            <person name="Mueller M."/>
            <person name="Kreis M."/>
            <person name="Delseny M."/>
            <person name="Puigdomenech P."/>
            <person name="Watson M."/>
            <person name="Schmidtheini T."/>
            <person name="Reichert B."/>
            <person name="Portetelle D."/>
            <person name="Perez-Alonso M."/>
            <person name="Boutry M."/>
            <person name="Bancroft I."/>
            <person name="Vos P."/>
            <person name="Hoheisel J."/>
            <person name="Zimmermann W."/>
            <person name="Wedler H."/>
            <person name="Ridley P."/>
            <person name="Langham S.-A."/>
            <person name="McCullagh B."/>
            <person name="Bilham L."/>
            <person name="Robben J."/>
            <person name="van der Schueren J."/>
            <person name="Grymonprez B."/>
            <person name="Chuang Y.-J."/>
            <person name="Vandenbussche F."/>
            <person name="Braeken M."/>
            <person name="Weltjens I."/>
            <person name="Voet M."/>
            <person name="Bastiaens I."/>
            <person name="Aert R."/>
            <person name="Defoor E."/>
            <person name="Weitzenegger T."/>
            <person name="Bothe G."/>
            <person name="Ramsperger U."/>
            <person name="Hilbert H."/>
            <person name="Braun M."/>
            <person name="Holzer E."/>
            <person name="Brandt A."/>
            <person name="Peters S."/>
            <person name="van Staveren M."/>
            <person name="Dirkse W."/>
            <person name="Mooijman P."/>
            <person name="Klein Lankhorst R."/>
            <person name="Rose M."/>
            <person name="Hauf J."/>
            <person name="Koetter P."/>
            <person name="Berneiser S."/>
            <person name="Hempel S."/>
            <person name="Feldpausch M."/>
            <person name="Lamberth S."/>
            <person name="Van den Daele H."/>
            <person name="De Keyser A."/>
            <person name="Buysshaert C."/>
            <person name="Gielen J."/>
            <person name="Villarroel R."/>
            <person name="De Clercq R."/>
            <person name="van Montagu M."/>
            <person name="Rogers J."/>
            <person name="Cronin A."/>
            <person name="Quail M.A."/>
            <person name="Bray-Allen S."/>
            <person name="Clark L."/>
            <person name="Doggett J."/>
            <person name="Hall S."/>
            <person name="Kay M."/>
            <person name="Lennard N."/>
            <person name="McLay K."/>
            <person name="Mayes R."/>
            <person name="Pettett A."/>
            <person name="Rajandream M.A."/>
            <person name="Lyne M."/>
            <person name="Benes V."/>
            <person name="Rechmann S."/>
            <person name="Borkova D."/>
            <person name="Bloecker H."/>
            <person name="Scharfe M."/>
            <person name="Grimm M."/>
            <person name="Loehnert T.-H."/>
            <person name="Dose S."/>
            <person name="de Haan M."/>
            <person name="Maarse A.C."/>
            <person name="Schaefer M."/>
            <person name="Mueller-Auer S."/>
            <person name="Gabel C."/>
            <person name="Fuchs M."/>
            <person name="Fartmann B."/>
            <person name="Granderath K."/>
            <person name="Dauner D."/>
            <person name="Herzl A."/>
            <person name="Neumann S."/>
            <person name="Argiriou A."/>
            <person name="Vitale D."/>
            <person name="Liguori R."/>
            <person name="Piravandi E."/>
            <person name="Massenet O."/>
            <person name="Quigley F."/>
            <person name="Clabauld G."/>
            <person name="Muendlein A."/>
            <person name="Felber R."/>
            <person name="Schnabl S."/>
            <person name="Hiller R."/>
            <person name="Schmidt W."/>
            <person name="Lecharny A."/>
            <person name="Aubourg S."/>
            <person name="Chefdor F."/>
            <person name="Cooke R."/>
            <person name="Berger C."/>
            <person name="Monfort A."/>
            <person name="Casacuberta E."/>
            <person name="Gibbons T."/>
            <person name="Weber N."/>
            <person name="Vandenbol M."/>
            <person name="Bargues M."/>
            <person name="Terol J."/>
            <person name="Torres A."/>
            <person name="Perez-Perez A."/>
            <person name="Purnelle B."/>
            <person name="Bent E."/>
            <person name="Johnson S."/>
            <person name="Tacon D."/>
            <person name="Jesse T."/>
            <person name="Heijnen L."/>
            <person name="Schwarz S."/>
            <person name="Scholler P."/>
            <person name="Heber S."/>
            <person name="Francs P."/>
            <person name="Bielke C."/>
            <person name="Frishman D."/>
            <person name="Haase D."/>
            <person name="Lemcke K."/>
            <person name="Mewes H.-W."/>
            <person name="Stocker S."/>
            <person name="Zaccaria P."/>
            <person name="Bevan M."/>
            <person name="Wilson R.K."/>
            <person name="de la Bastide M."/>
            <person name="Habermann K."/>
            <person name="Parnell L."/>
            <person name="Dedhia N."/>
            <person name="Gnoj L."/>
            <person name="Schutz K."/>
            <person name="Huang E."/>
            <person name="Spiegel L."/>
            <person name="Sekhon M."/>
            <person name="Murray J."/>
            <person name="Sheet P."/>
            <person name="Cordes M."/>
            <person name="Abu-Threideh J."/>
            <person name="Stoneking T."/>
            <person name="Kalicki J."/>
            <person name="Graves T."/>
            <person name="Harmon G."/>
            <person name="Edwards J."/>
            <person name="Latreille P."/>
            <person name="Courtney L."/>
            <person name="Cloud J."/>
            <person name="Abbott A."/>
            <person name="Scott K."/>
            <person name="Johnson D."/>
            <person name="Minx P."/>
            <person name="Bentley D."/>
            <person name="Fulton B."/>
            <person name="Miller N."/>
            <person name="Greco T."/>
            <person name="Kemp K."/>
            <person name="Kramer J."/>
            <person name="Fulton L."/>
            <person name="Mardis E."/>
            <person name="Dante M."/>
            <person name="Pepin K."/>
            <person name="Hillier L.W."/>
            <person name="Nelson J."/>
            <person name="Spieth J."/>
            <person name="Ryan E."/>
            <person name="Andrews S."/>
            <person name="Geisel C."/>
            <person name="Layman D."/>
            <person name="Du H."/>
            <person name="Ali J."/>
            <person name="Berghoff A."/>
            <person name="Jones K."/>
            <person name="Drone K."/>
            <person name="Cotton M."/>
            <person name="Joshu C."/>
            <person name="Antonoiu B."/>
            <person name="Zidanic M."/>
            <person name="Strong C."/>
            <person name="Sun H."/>
            <person name="Lamar B."/>
            <person name="Yordan C."/>
            <person name="Ma P."/>
            <person name="Zhong J."/>
            <person name="Preston R."/>
            <person name="Vil D."/>
            <person name="Shekher M."/>
            <person name="Matero A."/>
            <person name="Shah R."/>
            <person name="Swaby I.K."/>
            <person name="O'Shaughnessy A."/>
            <person name="Rodriguez M."/>
            <person name="Hoffman J."/>
            <person name="Till S."/>
            <person name="Granat S."/>
            <person name="Shohdy N."/>
            <person name="Hasegawa A."/>
            <person name="Hameed A."/>
            <person name="Lodhi M."/>
            <person name="Johnson A."/>
            <person name="Chen E."/>
            <person name="Marra M.A."/>
            <person name="Martienssen R."/>
            <person name="McCombie W.R."/>
        </authorList>
    </citation>
    <scope>NUCLEOTIDE SEQUENCE [LARGE SCALE GENOMIC DNA]</scope>
    <source>
        <strain>cv. Columbia</strain>
    </source>
</reference>
<reference key="4">
    <citation type="journal article" date="2017" name="Plant J.">
        <title>Araport11: a complete reannotation of the Arabidopsis thaliana reference genome.</title>
        <authorList>
            <person name="Cheng C.Y."/>
            <person name="Krishnakumar V."/>
            <person name="Chan A.P."/>
            <person name="Thibaud-Nissen F."/>
            <person name="Schobel S."/>
            <person name="Town C.D."/>
        </authorList>
    </citation>
    <scope>GENOME REANNOTATION</scope>
    <source>
        <strain>cv. Columbia</strain>
    </source>
</reference>
<reference key="5">
    <citation type="journal article" date="2003" name="Science">
        <title>Empirical analysis of transcriptional activity in the Arabidopsis genome.</title>
        <authorList>
            <person name="Yamada K."/>
            <person name="Lim J."/>
            <person name="Dale J.M."/>
            <person name="Chen H."/>
            <person name="Shinn P."/>
            <person name="Palm C.J."/>
            <person name="Southwick A.M."/>
            <person name="Wu H.C."/>
            <person name="Kim C.J."/>
            <person name="Nguyen M."/>
            <person name="Pham P.K."/>
            <person name="Cheuk R.F."/>
            <person name="Karlin-Newmann G."/>
            <person name="Liu S.X."/>
            <person name="Lam B."/>
            <person name="Sakano H."/>
            <person name="Wu T."/>
            <person name="Yu G."/>
            <person name="Miranda M."/>
            <person name="Quach H.L."/>
            <person name="Tripp M."/>
            <person name="Chang C.H."/>
            <person name="Lee J.M."/>
            <person name="Toriumi M.J."/>
            <person name="Chan M.M."/>
            <person name="Tang C.C."/>
            <person name="Onodera C.S."/>
            <person name="Deng J.M."/>
            <person name="Akiyama K."/>
            <person name="Ansari Y."/>
            <person name="Arakawa T."/>
            <person name="Banh J."/>
            <person name="Banno F."/>
            <person name="Bowser L."/>
            <person name="Brooks S.Y."/>
            <person name="Carninci P."/>
            <person name="Chao Q."/>
            <person name="Choy N."/>
            <person name="Enju A."/>
            <person name="Goldsmith A.D."/>
            <person name="Gurjal M."/>
            <person name="Hansen N.F."/>
            <person name="Hayashizaki Y."/>
            <person name="Johnson-Hopson C."/>
            <person name="Hsuan V.W."/>
            <person name="Iida K."/>
            <person name="Karnes M."/>
            <person name="Khan S."/>
            <person name="Koesema E."/>
            <person name="Ishida J."/>
            <person name="Jiang P.X."/>
            <person name="Jones T."/>
            <person name="Kawai J."/>
            <person name="Kamiya A."/>
            <person name="Meyers C."/>
            <person name="Nakajima M."/>
            <person name="Narusaka M."/>
            <person name="Seki M."/>
            <person name="Sakurai T."/>
            <person name="Satou M."/>
            <person name="Tamse R."/>
            <person name="Vaysberg M."/>
            <person name="Wallender E.K."/>
            <person name="Wong C."/>
            <person name="Yamamura Y."/>
            <person name="Yuan S."/>
            <person name="Shinozaki K."/>
            <person name="Davis R.W."/>
            <person name="Theologis A."/>
            <person name="Ecker J.R."/>
        </authorList>
    </citation>
    <scope>NUCLEOTIDE SEQUENCE [LARGE SCALE MRNA] (ISOFORM 1)</scope>
    <source>
        <strain>cv. Columbia</strain>
    </source>
</reference>
<reference key="6">
    <citation type="journal article" date="2009" name="DNA Res.">
        <title>Analysis of multiple occurrences of alternative splicing events in Arabidopsis thaliana using novel sequenced full-length cDNAs.</title>
        <authorList>
            <person name="Iida K."/>
            <person name="Fukami-Kobayashi K."/>
            <person name="Toyoda A."/>
            <person name="Sakaki Y."/>
            <person name="Kobayashi M."/>
            <person name="Seki M."/>
            <person name="Shinozaki K."/>
        </authorList>
    </citation>
    <scope>NUCLEOTIDE SEQUENCE [LARGE SCALE MRNA] (ISOFORMS 1 AND 2)</scope>
    <source>
        <strain>cv. Columbia</strain>
    </source>
</reference>
<reference key="7">
    <citation type="submission" date="2002-03" db="EMBL/GenBank/DDBJ databases">
        <title>Full-length cDNA from Arabidopsis thaliana.</title>
        <authorList>
            <person name="Brover V.V."/>
            <person name="Troukhan M.E."/>
            <person name="Alexandrov N.A."/>
            <person name="Lu Y.-P."/>
            <person name="Flavell R.B."/>
            <person name="Feldmann K.A."/>
        </authorList>
    </citation>
    <scope>NUCLEOTIDE SEQUENCE [LARGE SCALE MRNA] (ISOFORM 1)</scope>
</reference>
<reference key="8">
    <citation type="journal article" date="2006" name="Planta">
        <title>Evidence for a role of AtCAD 1 in lignification of elongating stems of Arabidopsis thaliana.</title>
        <authorList>
            <person name="Eudes A."/>
            <person name="Pollet B."/>
            <person name="Sibout R."/>
            <person name="Do C.-T."/>
            <person name="Seguin A."/>
            <person name="Lapierre C."/>
            <person name="Jouanin L."/>
        </authorList>
    </citation>
    <scope>FUNCTION</scope>
    <scope>TISSUE SPECIFICITY</scope>
    <scope>CATALYTIC ACTIVITY</scope>
</reference>
<reference key="9">
    <citation type="journal article" date="2007" name="Phytochemistry">
        <title>Expression of cinnamyl alcohol dehydrogenases and their putative homologues during Arabidopsis thaliana growth and development: lessons for database annotations?</title>
        <authorList>
            <person name="Kim S.-J."/>
            <person name="Kim K.-W."/>
            <person name="Cho M.-H."/>
            <person name="Franceschi V.R."/>
            <person name="Davin L.B."/>
            <person name="Lewis N.G."/>
        </authorList>
    </citation>
    <scope>TISSUE SPECIFICITY</scope>
</reference>
<name>CADH9_ARATH</name>
<comment type="function">
    <text evidence="3">Involved in lignin biosynthesis. May catalyze the final step specific for the production of lignin monomers, like coniferyl alcohol, sinapyl alcohol and 4-coumaryl alcohol.</text>
</comment>
<comment type="catalytic activity">
    <reaction evidence="2 8">
        <text>(E)-cinnamyl alcohol + NADP(+) = (E)-cinnamaldehyde + NADPH + H(+)</text>
        <dbReference type="Rhea" id="RHEA:10392"/>
        <dbReference type="ChEBI" id="CHEBI:15378"/>
        <dbReference type="ChEBI" id="CHEBI:16731"/>
        <dbReference type="ChEBI" id="CHEBI:33227"/>
        <dbReference type="ChEBI" id="CHEBI:57783"/>
        <dbReference type="ChEBI" id="CHEBI:58349"/>
        <dbReference type="EC" id="1.1.1.195"/>
    </reaction>
    <physiologicalReaction direction="right-to-left" evidence="2">
        <dbReference type="Rhea" id="RHEA:10394"/>
    </physiologicalReaction>
</comment>
<comment type="cofactor">
    <cofactor evidence="1">
        <name>Zn(2+)</name>
        <dbReference type="ChEBI" id="CHEBI:29105"/>
    </cofactor>
    <text evidence="1">Binds 2 Zn(2+) ions per subunit.</text>
</comment>
<comment type="pathway">
    <text>Aromatic compound metabolism; phenylpropanoid biosynthesis.</text>
</comment>
<comment type="subunit">
    <text evidence="1">Homodimer.</text>
</comment>
<comment type="alternative products">
    <event type="alternative splicing"/>
    <isoform>
        <id>P42734-1</id>
        <name>1</name>
        <sequence type="displayed"/>
    </isoform>
    <isoform>
        <id>P42734-2</id>
        <name>2</name>
        <sequence type="described" ref="VSP_037894 VSP_037895"/>
    </isoform>
</comment>
<comment type="tissue specificity">
    <text evidence="3 4">Expressed in the vasculature of the primary root and elongation regions. Expressed in the hypocotyl, cotyledon veins, vasculature of the first rosette leaves, and hydathodes. In stems, expressed in the vascular cambium, interfascicular cambium, developing xylem, and phloem. Expressed in the entire floral organs at late developing stage, and in the abscission, style and stigmatic regions of siliques and seed funicules.</text>
</comment>
<comment type="similarity">
    <text evidence="7">Belongs to the zinc-containing alcohol dehydrogenase family.</text>
</comment>
<comment type="sequence caution" evidence="7">
    <conflict type="frameshift">
        <sequence resource="EMBL-CDS" id="BAH56862"/>
    </conflict>
</comment>
<evidence type="ECO:0000250" key="1"/>
<evidence type="ECO:0000250" key="2">
    <source>
        <dbReference type="UniProtKB" id="P48523"/>
    </source>
</evidence>
<evidence type="ECO:0000269" key="3">
    <source>
    </source>
</evidence>
<evidence type="ECO:0000269" key="4">
    <source>
    </source>
</evidence>
<evidence type="ECO:0000303" key="5">
    <source>
    </source>
</evidence>
<evidence type="ECO:0000303" key="6">
    <source>
    </source>
</evidence>
<evidence type="ECO:0000305" key="7"/>
<evidence type="ECO:0000305" key="8">
    <source>
    </source>
</evidence>
<protein>
    <recommendedName>
        <fullName evidence="5">Probable cinnamyl alcohol dehydrogenase 9</fullName>
        <shortName evidence="5">AtCAD9</shortName>
        <ecNumber evidence="2 8">1.1.1.195</ecNumber>
    </recommendedName>
</protein>
<gene>
    <name type="primary">CAD9</name>
    <name type="synonym">CAD1</name>
    <name type="ordered locus">At4g39330</name>
    <name type="ORF">T22F8.230</name>
</gene>
<feature type="chain" id="PRO_0000160810" description="Probable cinnamyl alcohol dehydrogenase 9">
    <location>
        <begin position="1"/>
        <end position="360"/>
    </location>
</feature>
<feature type="binding site" evidence="1">
    <location>
        <position position="50"/>
    </location>
    <ligand>
        <name>Zn(2+)</name>
        <dbReference type="ChEBI" id="CHEBI:29105"/>
        <label>1</label>
        <note>catalytic</note>
    </ligand>
</feature>
<feature type="binding site" evidence="1">
    <location>
        <position position="52"/>
    </location>
    <ligand>
        <name>NADP(+)</name>
        <dbReference type="ChEBI" id="CHEBI:58349"/>
    </ligand>
</feature>
<feature type="binding site" evidence="1">
    <location>
        <position position="72"/>
    </location>
    <ligand>
        <name>Zn(2+)</name>
        <dbReference type="ChEBI" id="CHEBI:29105"/>
        <label>1</label>
        <note>catalytic</note>
    </ligand>
</feature>
<feature type="binding site" evidence="1">
    <location>
        <position position="73"/>
    </location>
    <ligand>
        <name>Zn(2+)</name>
        <dbReference type="ChEBI" id="CHEBI:29105"/>
        <label>1</label>
        <note>catalytic</note>
    </ligand>
</feature>
<feature type="binding site" evidence="1">
    <location>
        <position position="103"/>
    </location>
    <ligand>
        <name>Zn(2+)</name>
        <dbReference type="ChEBI" id="CHEBI:29105"/>
        <label>2</label>
    </ligand>
</feature>
<feature type="binding site" evidence="1">
    <location>
        <position position="106"/>
    </location>
    <ligand>
        <name>Zn(2+)</name>
        <dbReference type="ChEBI" id="CHEBI:29105"/>
        <label>2</label>
    </ligand>
</feature>
<feature type="binding site" evidence="1">
    <location>
        <position position="109"/>
    </location>
    <ligand>
        <name>Zn(2+)</name>
        <dbReference type="ChEBI" id="CHEBI:29105"/>
        <label>2</label>
    </ligand>
</feature>
<feature type="binding site" evidence="1">
    <location>
        <position position="117"/>
    </location>
    <ligand>
        <name>Zn(2+)</name>
        <dbReference type="ChEBI" id="CHEBI:29105"/>
        <label>2</label>
    </ligand>
</feature>
<feature type="binding site" evidence="1">
    <location>
        <position position="166"/>
    </location>
    <ligand>
        <name>Zn(2+)</name>
        <dbReference type="ChEBI" id="CHEBI:29105"/>
        <label>1</label>
        <note>catalytic</note>
    </ligand>
</feature>
<feature type="binding site" evidence="1">
    <location>
        <position position="170"/>
    </location>
    <ligand>
        <name>NADP(+)</name>
        <dbReference type="ChEBI" id="CHEBI:58349"/>
    </ligand>
</feature>
<feature type="binding site" evidence="1">
    <location>
        <begin position="191"/>
        <end position="196"/>
    </location>
    <ligand>
        <name>NADP(+)</name>
        <dbReference type="ChEBI" id="CHEBI:58349"/>
    </ligand>
</feature>
<feature type="binding site" evidence="1">
    <location>
        <begin position="214"/>
        <end position="219"/>
    </location>
    <ligand>
        <name>NADP(+)</name>
        <dbReference type="ChEBI" id="CHEBI:58349"/>
    </ligand>
</feature>
<feature type="binding site" evidence="1">
    <location>
        <position position="254"/>
    </location>
    <ligand>
        <name>NADP(+)</name>
        <dbReference type="ChEBI" id="CHEBI:58349"/>
    </ligand>
</feature>
<feature type="binding site" evidence="1">
    <location>
        <position position="278"/>
    </location>
    <ligand>
        <name>NADP(+)</name>
        <dbReference type="ChEBI" id="CHEBI:58349"/>
    </ligand>
</feature>
<feature type="binding site" evidence="1">
    <location>
        <begin position="301"/>
        <end position="303"/>
    </location>
    <ligand>
        <name>NADP(+)</name>
        <dbReference type="ChEBI" id="CHEBI:58349"/>
    </ligand>
</feature>
<feature type="splice variant" id="VSP_037894" description="In isoform 2." evidence="6">
    <original>DVGGMKETQE</original>
    <variation>LLSLMLGTGS</variation>
    <location>
        <begin position="302"/>
        <end position="311"/>
    </location>
</feature>
<feature type="splice variant" id="VSP_037895" description="In isoform 2." evidence="6">
    <location>
        <begin position="312"/>
        <end position="360"/>
    </location>
</feature>
<feature type="sequence conflict" description="In Ref. 1; AAA99511." evidence="7" ref="1">
    <original>I</original>
    <variation>S</variation>
    <location>
        <position position="202"/>
    </location>
</feature>
<feature type="sequence conflict" description="In Ref. 6; AAM64913." evidence="7" ref="6">
    <original>D</original>
    <variation>N</variation>
    <location>
        <position position="352"/>
    </location>
</feature>
<keyword id="KW-0025">Alternative splicing</keyword>
<keyword id="KW-0438">Lignin biosynthesis</keyword>
<keyword id="KW-0479">Metal-binding</keyword>
<keyword id="KW-0521">NADP</keyword>
<keyword id="KW-0560">Oxidoreductase</keyword>
<keyword id="KW-1185">Reference proteome</keyword>
<keyword id="KW-0862">Zinc</keyword>
<dbReference type="EC" id="1.1.1.195" evidence="2 8"/>
<dbReference type="EMBL" id="L37883">
    <property type="protein sequence ID" value="AAA99511.1"/>
    <property type="molecule type" value="Genomic_DNA"/>
</dbReference>
<dbReference type="EMBL" id="L37884">
    <property type="protein sequence ID" value="AAA74746.1"/>
    <property type="molecule type" value="mRNA"/>
</dbReference>
<dbReference type="EMBL" id="AY302076">
    <property type="protein sequence ID" value="AAP59429.1"/>
    <property type="molecule type" value="mRNA"/>
</dbReference>
<dbReference type="EMBL" id="AL050351">
    <property type="protein sequence ID" value="CAB43648.1"/>
    <property type="molecule type" value="Genomic_DNA"/>
</dbReference>
<dbReference type="EMBL" id="AL161595">
    <property type="protein sequence ID" value="CAB80596.1"/>
    <property type="molecule type" value="Genomic_DNA"/>
</dbReference>
<dbReference type="EMBL" id="CP002687">
    <property type="protein sequence ID" value="AEE87056.1"/>
    <property type="molecule type" value="Genomic_DNA"/>
</dbReference>
<dbReference type="EMBL" id="CP002687">
    <property type="protein sequence ID" value="AEE87057.1"/>
    <property type="molecule type" value="Genomic_DNA"/>
</dbReference>
<dbReference type="EMBL" id="AF370498">
    <property type="protein sequence ID" value="AAK43875.1"/>
    <property type="molecule type" value="mRNA"/>
</dbReference>
<dbReference type="EMBL" id="AY064669">
    <property type="protein sequence ID" value="AAL47376.1"/>
    <property type="molecule type" value="mRNA"/>
</dbReference>
<dbReference type="EMBL" id="AK317632">
    <property type="protein sequence ID" value="BAH20294.1"/>
    <property type="molecule type" value="mRNA"/>
</dbReference>
<dbReference type="EMBL" id="AK318747">
    <property type="protein sequence ID" value="BAH56862.1"/>
    <property type="status" value="ALT_FRAME"/>
    <property type="molecule type" value="mRNA"/>
</dbReference>
<dbReference type="EMBL" id="AY087363">
    <property type="protein sequence ID" value="AAM64913.1"/>
    <property type="molecule type" value="mRNA"/>
</dbReference>
<dbReference type="PIR" id="S71179">
    <property type="entry name" value="S71179"/>
</dbReference>
<dbReference type="PIR" id="T08581">
    <property type="entry name" value="T08581"/>
</dbReference>
<dbReference type="RefSeq" id="NP_001031812.1">
    <molecule id="P42734-2"/>
    <property type="nucleotide sequence ID" value="NM_001036735.2"/>
</dbReference>
<dbReference type="RefSeq" id="NP_195643.1">
    <molecule id="P42734-1"/>
    <property type="nucleotide sequence ID" value="NM_120093.5"/>
</dbReference>
<dbReference type="SMR" id="P42734"/>
<dbReference type="BioGRID" id="15368">
    <property type="interactions" value="1"/>
</dbReference>
<dbReference type="FunCoup" id="P42734">
    <property type="interactions" value="485"/>
</dbReference>
<dbReference type="IntAct" id="P42734">
    <property type="interactions" value="1"/>
</dbReference>
<dbReference type="STRING" id="3702.P42734"/>
<dbReference type="iPTMnet" id="P42734"/>
<dbReference type="MetOSite" id="P42734"/>
<dbReference type="PaxDb" id="3702-AT4G39330.1"/>
<dbReference type="ProteomicsDB" id="240313">
    <molecule id="P42734-1"/>
</dbReference>
<dbReference type="EnsemblPlants" id="AT4G39330.1">
    <molecule id="P42734-1"/>
    <property type="protein sequence ID" value="AT4G39330.1"/>
    <property type="gene ID" value="AT4G39330"/>
</dbReference>
<dbReference type="EnsemblPlants" id="AT4G39330.2">
    <molecule id="P42734-2"/>
    <property type="protein sequence ID" value="AT4G39330.2"/>
    <property type="gene ID" value="AT4G39330"/>
</dbReference>
<dbReference type="GeneID" id="830088"/>
<dbReference type="Gramene" id="AT4G39330.1">
    <molecule id="P42734-1"/>
    <property type="protein sequence ID" value="AT4G39330.1"/>
    <property type="gene ID" value="AT4G39330"/>
</dbReference>
<dbReference type="Gramene" id="AT4G39330.2">
    <molecule id="P42734-2"/>
    <property type="protein sequence ID" value="AT4G39330.2"/>
    <property type="gene ID" value="AT4G39330"/>
</dbReference>
<dbReference type="KEGG" id="ath:AT4G39330"/>
<dbReference type="Araport" id="AT4G39330"/>
<dbReference type="TAIR" id="AT4G39330">
    <property type="gene designation" value="CAD9"/>
</dbReference>
<dbReference type="eggNOG" id="KOG0023">
    <property type="taxonomic scope" value="Eukaryota"/>
</dbReference>
<dbReference type="HOGENOM" id="CLU_026673_20_2_1"/>
<dbReference type="InParanoid" id="P42734"/>
<dbReference type="OMA" id="RNEWGIA"/>
<dbReference type="OrthoDB" id="1879366at2759"/>
<dbReference type="PhylomeDB" id="P42734"/>
<dbReference type="BioCyc" id="ARA:AT4G39330-MONOMER"/>
<dbReference type="UniPathway" id="UPA00711"/>
<dbReference type="PRO" id="PR:P42734"/>
<dbReference type="Proteomes" id="UP000006548">
    <property type="component" value="Chromosome 4"/>
</dbReference>
<dbReference type="ExpressionAtlas" id="P42734">
    <property type="expression patterns" value="baseline and differential"/>
</dbReference>
<dbReference type="GO" id="GO:0048046">
    <property type="term" value="C:apoplast"/>
    <property type="evidence" value="ECO:0007005"/>
    <property type="project" value="TAIR"/>
</dbReference>
<dbReference type="GO" id="GO:0005829">
    <property type="term" value="C:cytosol"/>
    <property type="evidence" value="ECO:0007005"/>
    <property type="project" value="TAIR"/>
</dbReference>
<dbReference type="GO" id="GO:0005886">
    <property type="term" value="C:plasma membrane"/>
    <property type="evidence" value="ECO:0007005"/>
    <property type="project" value="TAIR"/>
</dbReference>
<dbReference type="GO" id="GO:0045551">
    <property type="term" value="F:cinnamyl-alcohol dehydrogenase activity"/>
    <property type="evidence" value="ECO:0000315"/>
    <property type="project" value="UniProtKB"/>
</dbReference>
<dbReference type="GO" id="GO:0008270">
    <property type="term" value="F:zinc ion binding"/>
    <property type="evidence" value="ECO:0007669"/>
    <property type="project" value="InterPro"/>
</dbReference>
<dbReference type="GO" id="GO:0009809">
    <property type="term" value="P:lignin biosynthetic process"/>
    <property type="evidence" value="ECO:0000315"/>
    <property type="project" value="UniProtKB"/>
</dbReference>
<dbReference type="CDD" id="cd05283">
    <property type="entry name" value="CAD1"/>
    <property type="match status" value="1"/>
</dbReference>
<dbReference type="FunFam" id="3.40.50.720:FF:000022">
    <property type="entry name" value="Cinnamyl alcohol dehydrogenase"/>
    <property type="match status" value="1"/>
</dbReference>
<dbReference type="FunFam" id="3.90.180.10:FF:000004">
    <property type="entry name" value="probable cinnamyl alcohol dehydrogenase"/>
    <property type="match status" value="1"/>
</dbReference>
<dbReference type="FunFam" id="3.90.180.10:FF:000100">
    <property type="entry name" value="Putative cinnamyl alcohol dehydrogenase 6"/>
    <property type="match status" value="1"/>
</dbReference>
<dbReference type="Gene3D" id="3.90.180.10">
    <property type="entry name" value="Medium-chain alcohol dehydrogenases, catalytic domain"/>
    <property type="match status" value="1"/>
</dbReference>
<dbReference type="Gene3D" id="3.40.50.720">
    <property type="entry name" value="NAD(P)-binding Rossmann-like Domain"/>
    <property type="match status" value="1"/>
</dbReference>
<dbReference type="InterPro" id="IPR013149">
    <property type="entry name" value="ADH-like_C"/>
</dbReference>
<dbReference type="InterPro" id="IPR013154">
    <property type="entry name" value="ADH-like_N"/>
</dbReference>
<dbReference type="InterPro" id="IPR002328">
    <property type="entry name" value="ADH_Zn_CS"/>
</dbReference>
<dbReference type="InterPro" id="IPR047109">
    <property type="entry name" value="CAD-like"/>
</dbReference>
<dbReference type="InterPro" id="IPR011032">
    <property type="entry name" value="GroES-like_sf"/>
</dbReference>
<dbReference type="InterPro" id="IPR036291">
    <property type="entry name" value="NAD(P)-bd_dom_sf"/>
</dbReference>
<dbReference type="InterPro" id="IPR020843">
    <property type="entry name" value="PKS_ER"/>
</dbReference>
<dbReference type="PANTHER" id="PTHR42683">
    <property type="entry name" value="ALDEHYDE REDUCTASE"/>
    <property type="match status" value="1"/>
</dbReference>
<dbReference type="Pfam" id="PF08240">
    <property type="entry name" value="ADH_N"/>
    <property type="match status" value="1"/>
</dbReference>
<dbReference type="Pfam" id="PF00107">
    <property type="entry name" value="ADH_zinc_N"/>
    <property type="match status" value="1"/>
</dbReference>
<dbReference type="SMART" id="SM00829">
    <property type="entry name" value="PKS_ER"/>
    <property type="match status" value="1"/>
</dbReference>
<dbReference type="SUPFAM" id="SSF50129">
    <property type="entry name" value="GroES-like"/>
    <property type="match status" value="1"/>
</dbReference>
<dbReference type="SUPFAM" id="SSF51735">
    <property type="entry name" value="NAD(P)-binding Rossmann-fold domains"/>
    <property type="match status" value="1"/>
</dbReference>
<dbReference type="PROSITE" id="PS00059">
    <property type="entry name" value="ADH_ZINC"/>
    <property type="match status" value="1"/>
</dbReference>